<gene>
    <name type="ORF">T25B9.9</name>
</gene>
<name>6PGD_CAEEL</name>
<reference key="1">
    <citation type="journal article" date="1998" name="Science">
        <title>Genome sequence of the nematode C. elegans: a platform for investigating biology.</title>
        <authorList>
            <consortium name="The C. elegans sequencing consortium"/>
        </authorList>
    </citation>
    <scope>NUCLEOTIDE SEQUENCE [LARGE SCALE GENOMIC DNA]</scope>
    <source>
        <strain>Bristol N2</strain>
    </source>
</reference>
<feature type="chain" id="PRO_0000090067" description="6-phosphogluconate dehydrogenase, decarboxylating">
    <location>
        <begin position="1"/>
        <end position="484"/>
    </location>
</feature>
<feature type="active site" description="Proton acceptor" evidence="1">
    <location>
        <position position="183"/>
    </location>
</feature>
<feature type="active site" description="Proton donor" evidence="1">
    <location>
        <position position="190"/>
    </location>
</feature>
<feature type="binding site" evidence="1">
    <location>
        <begin position="10"/>
        <end position="15"/>
    </location>
    <ligand>
        <name>NADP(+)</name>
        <dbReference type="ChEBI" id="CHEBI:58349"/>
    </ligand>
</feature>
<feature type="binding site" evidence="1">
    <location>
        <begin position="33"/>
        <end position="35"/>
    </location>
    <ligand>
        <name>NADP(+)</name>
        <dbReference type="ChEBI" id="CHEBI:58349"/>
    </ligand>
</feature>
<feature type="binding site" evidence="1">
    <location>
        <begin position="75"/>
        <end position="77"/>
    </location>
    <ligand>
        <name>NADP(+)</name>
        <dbReference type="ChEBI" id="CHEBI:58349"/>
    </ligand>
</feature>
<feature type="binding site" evidence="1">
    <location>
        <position position="103"/>
    </location>
    <ligand>
        <name>NADP(+)</name>
        <dbReference type="ChEBI" id="CHEBI:58349"/>
    </ligand>
</feature>
<feature type="binding site" description="in other chain" evidence="1">
    <location>
        <position position="103"/>
    </location>
    <ligand>
        <name>substrate</name>
        <note>ligand shared between dimeric partners</note>
    </ligand>
</feature>
<feature type="binding site" description="in other chain" evidence="1">
    <location>
        <begin position="129"/>
        <end position="131"/>
    </location>
    <ligand>
        <name>substrate</name>
        <note>ligand shared between dimeric partners</note>
    </ligand>
</feature>
<feature type="binding site" description="in other chain" evidence="1">
    <location>
        <begin position="186"/>
        <end position="187"/>
    </location>
    <ligand>
        <name>substrate</name>
        <note>ligand shared between dimeric partners</note>
    </ligand>
</feature>
<feature type="binding site" description="in other chain" evidence="1">
    <location>
        <position position="191"/>
    </location>
    <ligand>
        <name>substrate</name>
        <note>ligand shared between dimeric partners</note>
    </ligand>
</feature>
<feature type="binding site" description="in other chain" evidence="1">
    <location>
        <position position="260"/>
    </location>
    <ligand>
        <name>substrate</name>
        <note>ligand shared between dimeric partners</note>
    </ligand>
</feature>
<feature type="binding site" description="in other chain" evidence="1">
    <location>
        <position position="287"/>
    </location>
    <ligand>
        <name>substrate</name>
        <note>ligand shared between dimeric partners</note>
    </ligand>
</feature>
<feature type="binding site" evidence="1">
    <location>
        <position position="448"/>
    </location>
    <ligand>
        <name>substrate</name>
        <note>ligand shared between dimeric partners</note>
    </ligand>
</feature>
<feature type="binding site" evidence="1">
    <location>
        <position position="454"/>
    </location>
    <ligand>
        <name>substrate</name>
        <note>ligand shared between dimeric partners</note>
    </ligand>
</feature>
<protein>
    <recommendedName>
        <fullName>6-phosphogluconate dehydrogenase, decarboxylating</fullName>
        <ecNumber>1.1.1.44</ecNumber>
    </recommendedName>
</protein>
<evidence type="ECO:0000250" key="1"/>
<evidence type="ECO:0000305" key="2"/>
<proteinExistence type="inferred from homology"/>
<sequence length="484" mass="53196">MAEADIAVIGLAVMGQNLILNMNDHGFTVCAFNRTVKLVDDFLANEAKGTKIIGAHSIEEMCKKLKRPRRVMMLIKAGTPVDMMIDAIVPHLEEGDIIIDGGNSEYTDSNRRSEQLAAKGIMFVGCGVSGGEEGARFGPSLMPGGNPKAWPHLKDIFQKIAAKSNGEPCCDWVGNAGSGHFVKMVHNGIEYGDMQLIAEAYHLLSKAVELNHDQMAEVLDDWNKGELESFLIEITANILKYRDEQGEPIVPKIRDSAGQKGTGKWTCFAALEYGLPVTLIGEAVFARCLSALKDERVRASKQLPRPQVSPDTVVQDKRVFIKQISKALYASKIVSYAQGFMLLAEASKQFNWNLNFGAIALMWRGGCIIRSRFLGDIEHAFQKNKQLSNLLLDDFFTKAITEAQDSWRVVVCAAVRLGIPVPAFSSALAFYDGYTSEVVPANLLQAQRDYFGAHTYELLAKPGTWVHTNWTGTGGRVTSNAYNA</sequence>
<comment type="function">
    <text evidence="1">Catalyzes the oxidative decarboxylation of 6-phosphogluconate to ribulose 5-phosphate and CO(2), with concomitant reduction of NADP to NADPH.</text>
</comment>
<comment type="catalytic activity">
    <reaction>
        <text>6-phospho-D-gluconate + NADP(+) = D-ribulose 5-phosphate + CO2 + NADPH</text>
        <dbReference type="Rhea" id="RHEA:10116"/>
        <dbReference type="ChEBI" id="CHEBI:16526"/>
        <dbReference type="ChEBI" id="CHEBI:57783"/>
        <dbReference type="ChEBI" id="CHEBI:58121"/>
        <dbReference type="ChEBI" id="CHEBI:58349"/>
        <dbReference type="ChEBI" id="CHEBI:58759"/>
        <dbReference type="EC" id="1.1.1.44"/>
    </reaction>
</comment>
<comment type="pathway">
    <text>Carbohydrate degradation; pentose phosphate pathway; D-ribulose 5-phosphate from D-glucose 6-phosphate (oxidative stage): step 3/3.</text>
</comment>
<comment type="subunit">
    <text evidence="1">Homodimer.</text>
</comment>
<comment type="similarity">
    <text evidence="2">Belongs to the 6-phosphogluconate dehydrogenase family.</text>
</comment>
<accession>Q17761</accession>
<accession>Q22772</accession>
<keyword id="KW-0311">Gluconate utilization</keyword>
<keyword id="KW-0521">NADP</keyword>
<keyword id="KW-0560">Oxidoreductase</keyword>
<keyword id="KW-0570">Pentose shunt</keyword>
<keyword id="KW-1185">Reference proteome</keyword>
<dbReference type="EC" id="1.1.1.44"/>
<dbReference type="EMBL" id="Z70311">
    <property type="protein sequence ID" value="CAA94380.1"/>
    <property type="molecule type" value="Genomic_DNA"/>
</dbReference>
<dbReference type="EMBL" id="Z70306">
    <property type="protein sequence ID" value="CAA94380.1"/>
    <property type="status" value="JOINED"/>
    <property type="molecule type" value="Genomic_DNA"/>
</dbReference>
<dbReference type="PIR" id="T19020">
    <property type="entry name" value="T19020"/>
</dbReference>
<dbReference type="RefSeq" id="NP_501998.1">
    <property type="nucleotide sequence ID" value="NM_069597.8"/>
</dbReference>
<dbReference type="SMR" id="Q17761"/>
<dbReference type="BioGRID" id="43072">
    <property type="interactions" value="23"/>
</dbReference>
<dbReference type="FunCoup" id="Q17761">
    <property type="interactions" value="1643"/>
</dbReference>
<dbReference type="STRING" id="6239.T25B9.9.1"/>
<dbReference type="PaxDb" id="6239-T25B9.9"/>
<dbReference type="PeptideAtlas" id="Q17761"/>
<dbReference type="EnsemblMetazoa" id="T25B9.9.1">
    <property type="protein sequence ID" value="T25B9.9.1"/>
    <property type="gene ID" value="WBGene00012015"/>
</dbReference>
<dbReference type="GeneID" id="177971"/>
<dbReference type="KEGG" id="cel:CELE_T25B9.9"/>
<dbReference type="UCSC" id="T25B9.9.1">
    <property type="organism name" value="c. elegans"/>
</dbReference>
<dbReference type="AGR" id="WB:WBGene00012015"/>
<dbReference type="CTD" id="177971"/>
<dbReference type="WormBase" id="T25B9.9">
    <property type="protein sequence ID" value="CE06508"/>
    <property type="gene ID" value="WBGene00012015"/>
</dbReference>
<dbReference type="eggNOG" id="KOG2653">
    <property type="taxonomic scope" value="Eukaryota"/>
</dbReference>
<dbReference type="GeneTree" id="ENSGT00390000009023"/>
<dbReference type="HOGENOM" id="CLU_024540_4_2_1"/>
<dbReference type="InParanoid" id="Q17761"/>
<dbReference type="OMA" id="CVTHVGP"/>
<dbReference type="OrthoDB" id="434986at2759"/>
<dbReference type="PhylomeDB" id="Q17761"/>
<dbReference type="Reactome" id="R-CEL-71336">
    <property type="pathway name" value="Pentose phosphate pathway"/>
</dbReference>
<dbReference type="UniPathway" id="UPA00115">
    <property type="reaction ID" value="UER00410"/>
</dbReference>
<dbReference type="PRO" id="PR:Q17761"/>
<dbReference type="Proteomes" id="UP000001940">
    <property type="component" value="Chromosome IV"/>
</dbReference>
<dbReference type="Bgee" id="WBGene00012015">
    <property type="expression patterns" value="Expressed in adult organism and 4 other cell types or tissues"/>
</dbReference>
<dbReference type="GO" id="GO:0005829">
    <property type="term" value="C:cytosol"/>
    <property type="evidence" value="ECO:0000318"/>
    <property type="project" value="GO_Central"/>
</dbReference>
<dbReference type="GO" id="GO:0050661">
    <property type="term" value="F:NADP binding"/>
    <property type="evidence" value="ECO:0000318"/>
    <property type="project" value="GO_Central"/>
</dbReference>
<dbReference type="GO" id="GO:0004616">
    <property type="term" value="F:phosphogluconate dehydrogenase (decarboxylating) activity"/>
    <property type="evidence" value="ECO:0000318"/>
    <property type="project" value="GO_Central"/>
</dbReference>
<dbReference type="GO" id="GO:0019521">
    <property type="term" value="P:D-gluconate metabolic process"/>
    <property type="evidence" value="ECO:0007669"/>
    <property type="project" value="UniProtKB-KW"/>
</dbReference>
<dbReference type="GO" id="GO:0050829">
    <property type="term" value="P:defense response to Gram-negative bacterium"/>
    <property type="evidence" value="ECO:0000315"/>
    <property type="project" value="UniProtKB"/>
</dbReference>
<dbReference type="GO" id="GO:0010629">
    <property type="term" value="P:negative regulation of gene expression"/>
    <property type="evidence" value="ECO:0000315"/>
    <property type="project" value="UniProtKB"/>
</dbReference>
<dbReference type="GO" id="GO:0009051">
    <property type="term" value="P:pentose-phosphate shunt, oxidative branch"/>
    <property type="evidence" value="ECO:0000318"/>
    <property type="project" value="GO_Central"/>
</dbReference>
<dbReference type="FunFam" id="1.10.1040.10:FF:000002">
    <property type="entry name" value="6-phosphogluconate dehydrogenase, decarboxylating"/>
    <property type="match status" value="1"/>
</dbReference>
<dbReference type="FunFam" id="1.20.5.320:FF:000002">
    <property type="entry name" value="6-phosphogluconate dehydrogenase, decarboxylating"/>
    <property type="match status" value="1"/>
</dbReference>
<dbReference type="FunFam" id="3.40.50.720:FF:000007">
    <property type="entry name" value="6-phosphogluconate dehydrogenase, decarboxylating"/>
    <property type="match status" value="1"/>
</dbReference>
<dbReference type="Gene3D" id="1.20.5.320">
    <property type="entry name" value="6-Phosphogluconate Dehydrogenase, domain 3"/>
    <property type="match status" value="1"/>
</dbReference>
<dbReference type="Gene3D" id="1.10.1040.10">
    <property type="entry name" value="N-(1-d-carboxylethyl)-l-norvaline Dehydrogenase, domain 2"/>
    <property type="match status" value="1"/>
</dbReference>
<dbReference type="Gene3D" id="3.40.50.720">
    <property type="entry name" value="NAD(P)-binding Rossmann-like Domain"/>
    <property type="match status" value="1"/>
</dbReference>
<dbReference type="InterPro" id="IPR008927">
    <property type="entry name" value="6-PGluconate_DH-like_C_sf"/>
</dbReference>
<dbReference type="InterPro" id="IPR013328">
    <property type="entry name" value="6PGD_dom2"/>
</dbReference>
<dbReference type="InterPro" id="IPR006114">
    <property type="entry name" value="6PGDH_C"/>
</dbReference>
<dbReference type="InterPro" id="IPR006113">
    <property type="entry name" value="6PGDH_Gnd/GntZ"/>
</dbReference>
<dbReference type="InterPro" id="IPR006115">
    <property type="entry name" value="6PGDH_NADP-bd"/>
</dbReference>
<dbReference type="InterPro" id="IPR006184">
    <property type="entry name" value="6PGdom_BS"/>
</dbReference>
<dbReference type="InterPro" id="IPR036291">
    <property type="entry name" value="NAD(P)-bd_dom_sf"/>
</dbReference>
<dbReference type="InterPro" id="IPR006183">
    <property type="entry name" value="Pgluconate_DH"/>
</dbReference>
<dbReference type="NCBIfam" id="TIGR00873">
    <property type="entry name" value="gnd"/>
    <property type="match status" value="1"/>
</dbReference>
<dbReference type="NCBIfam" id="NF006765">
    <property type="entry name" value="PRK09287.1"/>
    <property type="match status" value="1"/>
</dbReference>
<dbReference type="PANTHER" id="PTHR11811">
    <property type="entry name" value="6-PHOSPHOGLUCONATE DEHYDROGENASE"/>
    <property type="match status" value="1"/>
</dbReference>
<dbReference type="Pfam" id="PF00393">
    <property type="entry name" value="6PGD"/>
    <property type="match status" value="1"/>
</dbReference>
<dbReference type="Pfam" id="PF03446">
    <property type="entry name" value="NAD_binding_2"/>
    <property type="match status" value="1"/>
</dbReference>
<dbReference type="PIRSF" id="PIRSF000109">
    <property type="entry name" value="6PGD"/>
    <property type="match status" value="1"/>
</dbReference>
<dbReference type="PRINTS" id="PR00076">
    <property type="entry name" value="6PGDHDRGNASE"/>
</dbReference>
<dbReference type="SMART" id="SM01350">
    <property type="entry name" value="6PGD"/>
    <property type="match status" value="1"/>
</dbReference>
<dbReference type="SUPFAM" id="SSF48179">
    <property type="entry name" value="6-phosphogluconate dehydrogenase C-terminal domain-like"/>
    <property type="match status" value="1"/>
</dbReference>
<dbReference type="SUPFAM" id="SSF51735">
    <property type="entry name" value="NAD(P)-binding Rossmann-fold domains"/>
    <property type="match status" value="1"/>
</dbReference>
<dbReference type="PROSITE" id="PS00461">
    <property type="entry name" value="6PGD"/>
    <property type="match status" value="1"/>
</dbReference>
<organism>
    <name type="scientific">Caenorhabditis elegans</name>
    <dbReference type="NCBI Taxonomy" id="6239"/>
    <lineage>
        <taxon>Eukaryota</taxon>
        <taxon>Metazoa</taxon>
        <taxon>Ecdysozoa</taxon>
        <taxon>Nematoda</taxon>
        <taxon>Chromadorea</taxon>
        <taxon>Rhabditida</taxon>
        <taxon>Rhabditina</taxon>
        <taxon>Rhabditomorpha</taxon>
        <taxon>Rhabditoidea</taxon>
        <taxon>Rhabditidae</taxon>
        <taxon>Peloderinae</taxon>
        <taxon>Caenorhabditis</taxon>
    </lineage>
</organism>